<proteinExistence type="inferred from homology"/>
<keyword id="KW-0028">Amino-acid biosynthesis</keyword>
<keyword id="KW-0067">ATP-binding</keyword>
<keyword id="KW-0963">Cytoplasm</keyword>
<keyword id="KW-0418">Kinase</keyword>
<keyword id="KW-0547">Nucleotide-binding</keyword>
<keyword id="KW-1185">Reference proteome</keyword>
<keyword id="KW-0791">Threonine biosynthesis</keyword>
<keyword id="KW-0808">Transferase</keyword>
<gene>
    <name evidence="1" type="primary">thrB</name>
    <name type="ordered locus">ECA3890</name>
</gene>
<protein>
    <recommendedName>
        <fullName evidence="1">Homoserine kinase</fullName>
        <shortName evidence="1">HK</shortName>
        <shortName evidence="1">HSK</shortName>
        <ecNumber evidence="1">2.7.1.39</ecNumber>
    </recommendedName>
</protein>
<evidence type="ECO:0000255" key="1">
    <source>
        <dbReference type="HAMAP-Rule" id="MF_00384"/>
    </source>
</evidence>
<comment type="function">
    <text evidence="1">Catalyzes the ATP-dependent phosphorylation of L-homoserine to L-homoserine phosphate.</text>
</comment>
<comment type="catalytic activity">
    <reaction evidence="1">
        <text>L-homoserine + ATP = O-phospho-L-homoserine + ADP + H(+)</text>
        <dbReference type="Rhea" id="RHEA:13985"/>
        <dbReference type="ChEBI" id="CHEBI:15378"/>
        <dbReference type="ChEBI" id="CHEBI:30616"/>
        <dbReference type="ChEBI" id="CHEBI:57476"/>
        <dbReference type="ChEBI" id="CHEBI:57590"/>
        <dbReference type="ChEBI" id="CHEBI:456216"/>
        <dbReference type="EC" id="2.7.1.39"/>
    </reaction>
</comment>
<comment type="pathway">
    <text evidence="1">Amino-acid biosynthesis; L-threonine biosynthesis; L-threonine from L-aspartate: step 4/5.</text>
</comment>
<comment type="subcellular location">
    <subcellularLocation>
        <location evidence="1">Cytoplasm</location>
    </subcellularLocation>
</comment>
<comment type="similarity">
    <text evidence="1">Belongs to the GHMP kinase family. Homoserine kinase subfamily.</text>
</comment>
<name>KHSE_PECAS</name>
<reference key="1">
    <citation type="journal article" date="2004" name="Proc. Natl. Acad. Sci. U.S.A.">
        <title>Genome sequence of the enterobacterial phytopathogen Erwinia carotovora subsp. atroseptica and characterization of virulence factors.</title>
        <authorList>
            <person name="Bell K.S."/>
            <person name="Sebaihia M."/>
            <person name="Pritchard L."/>
            <person name="Holden M.T.G."/>
            <person name="Hyman L.J."/>
            <person name="Holeva M.C."/>
            <person name="Thomson N.R."/>
            <person name="Bentley S.D."/>
            <person name="Churcher L.J.C."/>
            <person name="Mungall K."/>
            <person name="Atkin R."/>
            <person name="Bason N."/>
            <person name="Brooks K."/>
            <person name="Chillingworth T."/>
            <person name="Clark K."/>
            <person name="Doggett J."/>
            <person name="Fraser A."/>
            <person name="Hance Z."/>
            <person name="Hauser H."/>
            <person name="Jagels K."/>
            <person name="Moule S."/>
            <person name="Norbertczak H."/>
            <person name="Ormond D."/>
            <person name="Price C."/>
            <person name="Quail M.A."/>
            <person name="Sanders M."/>
            <person name="Walker D."/>
            <person name="Whitehead S."/>
            <person name="Salmond G.P.C."/>
            <person name="Birch P.R.J."/>
            <person name="Parkhill J."/>
            <person name="Toth I.K."/>
        </authorList>
    </citation>
    <scope>NUCLEOTIDE SEQUENCE [LARGE SCALE GENOMIC DNA]</scope>
    <source>
        <strain>SCRI 1043 / ATCC BAA-672</strain>
    </source>
</reference>
<organism>
    <name type="scientific">Pectobacterium atrosepticum (strain SCRI 1043 / ATCC BAA-672)</name>
    <name type="common">Erwinia carotovora subsp. atroseptica</name>
    <dbReference type="NCBI Taxonomy" id="218491"/>
    <lineage>
        <taxon>Bacteria</taxon>
        <taxon>Pseudomonadati</taxon>
        <taxon>Pseudomonadota</taxon>
        <taxon>Gammaproteobacteria</taxon>
        <taxon>Enterobacterales</taxon>
        <taxon>Pectobacteriaceae</taxon>
        <taxon>Pectobacterium</taxon>
    </lineage>
</organism>
<dbReference type="EC" id="2.7.1.39" evidence="1"/>
<dbReference type="EMBL" id="BX950851">
    <property type="protein sequence ID" value="CAG76788.1"/>
    <property type="molecule type" value="Genomic_DNA"/>
</dbReference>
<dbReference type="RefSeq" id="WP_011095388.1">
    <property type="nucleotide sequence ID" value="NC_004547.2"/>
</dbReference>
<dbReference type="SMR" id="Q6D0A9"/>
<dbReference type="STRING" id="218491.ECA3890"/>
<dbReference type="GeneID" id="57210507"/>
<dbReference type="KEGG" id="eca:ECA3890"/>
<dbReference type="PATRIC" id="fig|218491.5.peg.3948"/>
<dbReference type="eggNOG" id="COG0083">
    <property type="taxonomic scope" value="Bacteria"/>
</dbReference>
<dbReference type="HOGENOM" id="CLU_041243_1_1_6"/>
<dbReference type="OrthoDB" id="9769912at2"/>
<dbReference type="UniPathway" id="UPA00050">
    <property type="reaction ID" value="UER00064"/>
</dbReference>
<dbReference type="Proteomes" id="UP000007966">
    <property type="component" value="Chromosome"/>
</dbReference>
<dbReference type="GO" id="GO:0005737">
    <property type="term" value="C:cytoplasm"/>
    <property type="evidence" value="ECO:0007669"/>
    <property type="project" value="UniProtKB-SubCell"/>
</dbReference>
<dbReference type="GO" id="GO:0005524">
    <property type="term" value="F:ATP binding"/>
    <property type="evidence" value="ECO:0007669"/>
    <property type="project" value="UniProtKB-UniRule"/>
</dbReference>
<dbReference type="GO" id="GO:0004413">
    <property type="term" value="F:homoserine kinase activity"/>
    <property type="evidence" value="ECO:0007669"/>
    <property type="project" value="UniProtKB-UniRule"/>
</dbReference>
<dbReference type="GO" id="GO:0009088">
    <property type="term" value="P:threonine biosynthetic process"/>
    <property type="evidence" value="ECO:0007669"/>
    <property type="project" value="UniProtKB-UniRule"/>
</dbReference>
<dbReference type="FunFam" id="3.30.230.10:FF:000020">
    <property type="entry name" value="Homoserine kinase"/>
    <property type="match status" value="1"/>
</dbReference>
<dbReference type="Gene3D" id="3.30.230.10">
    <property type="match status" value="1"/>
</dbReference>
<dbReference type="Gene3D" id="3.30.70.890">
    <property type="entry name" value="GHMP kinase, C-terminal domain"/>
    <property type="match status" value="1"/>
</dbReference>
<dbReference type="HAMAP" id="MF_00384">
    <property type="entry name" value="Homoser_kinase"/>
    <property type="match status" value="1"/>
</dbReference>
<dbReference type="InterPro" id="IPR013750">
    <property type="entry name" value="GHMP_kinase_C_dom"/>
</dbReference>
<dbReference type="InterPro" id="IPR036554">
    <property type="entry name" value="GHMP_kinase_C_sf"/>
</dbReference>
<dbReference type="InterPro" id="IPR006204">
    <property type="entry name" value="GHMP_kinase_N_dom"/>
</dbReference>
<dbReference type="InterPro" id="IPR006203">
    <property type="entry name" value="GHMP_knse_ATP-bd_CS"/>
</dbReference>
<dbReference type="InterPro" id="IPR000870">
    <property type="entry name" value="Homoserine_kinase"/>
</dbReference>
<dbReference type="InterPro" id="IPR020568">
    <property type="entry name" value="Ribosomal_Su5_D2-typ_SF"/>
</dbReference>
<dbReference type="InterPro" id="IPR014721">
    <property type="entry name" value="Ribsml_uS5_D2-typ_fold_subgr"/>
</dbReference>
<dbReference type="NCBIfam" id="NF002288">
    <property type="entry name" value="PRK01212.1-4"/>
    <property type="match status" value="1"/>
</dbReference>
<dbReference type="NCBIfam" id="TIGR00191">
    <property type="entry name" value="thrB"/>
    <property type="match status" value="1"/>
</dbReference>
<dbReference type="PANTHER" id="PTHR20861:SF1">
    <property type="entry name" value="HOMOSERINE KINASE"/>
    <property type="match status" value="1"/>
</dbReference>
<dbReference type="PANTHER" id="PTHR20861">
    <property type="entry name" value="HOMOSERINE/4-DIPHOSPHOCYTIDYL-2-C-METHYL-D-ERYTHRITOL KINASE"/>
    <property type="match status" value="1"/>
</dbReference>
<dbReference type="Pfam" id="PF08544">
    <property type="entry name" value="GHMP_kinases_C"/>
    <property type="match status" value="1"/>
</dbReference>
<dbReference type="Pfam" id="PF00288">
    <property type="entry name" value="GHMP_kinases_N"/>
    <property type="match status" value="1"/>
</dbReference>
<dbReference type="PIRSF" id="PIRSF000676">
    <property type="entry name" value="Homoser_kin"/>
    <property type="match status" value="1"/>
</dbReference>
<dbReference type="PRINTS" id="PR00958">
    <property type="entry name" value="HOMSERKINASE"/>
</dbReference>
<dbReference type="SUPFAM" id="SSF55060">
    <property type="entry name" value="GHMP Kinase, C-terminal domain"/>
    <property type="match status" value="1"/>
</dbReference>
<dbReference type="SUPFAM" id="SSF54211">
    <property type="entry name" value="Ribosomal protein S5 domain 2-like"/>
    <property type="match status" value="1"/>
</dbReference>
<dbReference type="PROSITE" id="PS00627">
    <property type="entry name" value="GHMP_KINASES_ATP"/>
    <property type="match status" value="1"/>
</dbReference>
<accession>Q6D0A9</accession>
<sequence length="309" mass="33237">MVKIYAPASIGNVSVGFDVLGAAVSPVDGSLLGDCVSVEAADLFSLRNEGRFVSKLPDNPKENIVYQCWELFCQEIGKTVPVAMTLEKNMPIGSGLGSSACSVVAGLMAMNEFCGKPLDDTRLLRLMGELEGRISGSVHYDNVAPCFLGGVQLMLEENGIISQPVPSFDDWLWVMAYPGIKVSTAEARAILPAQYRRQDCISHGRYLAGFIHACHTGQAELAAKLMKDVIAEPYRTKLLPGFAAARQAAEDIGALACGISGSGPTLFSVCNDMASAQRLADWLRDNYLQNDEGFVHICRLDKTGARQLG</sequence>
<feature type="chain" id="PRO_0000156571" description="Homoserine kinase">
    <location>
        <begin position="1"/>
        <end position="309"/>
    </location>
</feature>
<feature type="binding site" evidence="1">
    <location>
        <begin position="91"/>
        <end position="101"/>
    </location>
    <ligand>
        <name>ATP</name>
        <dbReference type="ChEBI" id="CHEBI:30616"/>
    </ligand>
</feature>